<dbReference type="EC" id="1.1.5.4" evidence="1"/>
<dbReference type="EMBL" id="AY129296">
    <property type="protein sequence ID" value="AAN01356.1"/>
    <property type="molecule type" value="Genomic_DNA"/>
</dbReference>
<dbReference type="EMBL" id="AE004091">
    <property type="protein sequence ID" value="AAG08028.1"/>
    <property type="molecule type" value="Genomic_DNA"/>
</dbReference>
<dbReference type="PIR" id="G83065">
    <property type="entry name" value="G83065"/>
</dbReference>
<dbReference type="RefSeq" id="NP_253330.1">
    <property type="nucleotide sequence ID" value="NC_002516.2"/>
</dbReference>
<dbReference type="SMR" id="Q9HVF1"/>
<dbReference type="STRING" id="208964.PA4640"/>
<dbReference type="PaxDb" id="208964-PA4640"/>
<dbReference type="DNASU" id="881249"/>
<dbReference type="GeneID" id="881249"/>
<dbReference type="KEGG" id="pae:PA4640"/>
<dbReference type="PATRIC" id="fig|208964.12.peg.4861"/>
<dbReference type="PseudoCAP" id="PA4640"/>
<dbReference type="HOGENOM" id="CLU_028151_0_0_6"/>
<dbReference type="InParanoid" id="Q9HVF1"/>
<dbReference type="OrthoDB" id="9763983at2"/>
<dbReference type="PhylomeDB" id="Q9HVF1"/>
<dbReference type="BioCyc" id="PAER208964:G1FZ6-4736-MONOMER"/>
<dbReference type="BRENDA" id="1.1.5.4">
    <property type="organism ID" value="5087"/>
</dbReference>
<dbReference type="UniPathway" id="UPA00223">
    <property type="reaction ID" value="UER01008"/>
</dbReference>
<dbReference type="Proteomes" id="UP000002438">
    <property type="component" value="Chromosome"/>
</dbReference>
<dbReference type="GO" id="GO:0005737">
    <property type="term" value="C:cytoplasm"/>
    <property type="evidence" value="ECO:0000318"/>
    <property type="project" value="GO_Central"/>
</dbReference>
<dbReference type="GO" id="GO:0008924">
    <property type="term" value="F:L-malate dehydrogenase (quinone) activity"/>
    <property type="evidence" value="ECO:0000314"/>
    <property type="project" value="PseudoCAP"/>
</dbReference>
<dbReference type="GO" id="GO:0006099">
    <property type="term" value="P:tricarboxylic acid cycle"/>
    <property type="evidence" value="ECO:0007669"/>
    <property type="project" value="UniProtKB-UniRule"/>
</dbReference>
<dbReference type="Gene3D" id="3.30.9.10">
    <property type="entry name" value="D-Amino Acid Oxidase, subunit A, domain 2"/>
    <property type="match status" value="1"/>
</dbReference>
<dbReference type="Gene3D" id="3.50.50.60">
    <property type="entry name" value="FAD/NAD(P)-binding domain"/>
    <property type="match status" value="1"/>
</dbReference>
<dbReference type="HAMAP" id="MF_00212">
    <property type="entry name" value="MQO"/>
    <property type="match status" value="1"/>
</dbReference>
<dbReference type="InterPro" id="IPR036188">
    <property type="entry name" value="FAD/NAD-bd_sf"/>
</dbReference>
<dbReference type="InterPro" id="IPR006231">
    <property type="entry name" value="MQO"/>
</dbReference>
<dbReference type="NCBIfam" id="TIGR01320">
    <property type="entry name" value="mal_quin_oxido"/>
    <property type="match status" value="1"/>
</dbReference>
<dbReference type="NCBIfam" id="NF003603">
    <property type="entry name" value="PRK05257.1-1"/>
    <property type="match status" value="1"/>
</dbReference>
<dbReference type="NCBIfam" id="NF003605">
    <property type="entry name" value="PRK05257.1-4"/>
    <property type="match status" value="1"/>
</dbReference>
<dbReference type="NCBIfam" id="NF003606">
    <property type="entry name" value="PRK05257.2-1"/>
    <property type="match status" value="1"/>
</dbReference>
<dbReference type="NCBIfam" id="NF003608">
    <property type="entry name" value="PRK05257.2-4"/>
    <property type="match status" value="1"/>
</dbReference>
<dbReference type="NCBIfam" id="NF003611">
    <property type="entry name" value="PRK05257.3-2"/>
    <property type="match status" value="1"/>
</dbReference>
<dbReference type="NCBIfam" id="NF003613">
    <property type="entry name" value="PRK05257.3-4"/>
    <property type="match status" value="1"/>
</dbReference>
<dbReference type="NCBIfam" id="NF009875">
    <property type="entry name" value="PRK13339.1"/>
    <property type="match status" value="1"/>
</dbReference>
<dbReference type="PANTHER" id="PTHR43104">
    <property type="entry name" value="L-2-HYDROXYGLUTARATE DEHYDROGENASE, MITOCHONDRIAL"/>
    <property type="match status" value="1"/>
</dbReference>
<dbReference type="PANTHER" id="PTHR43104:SF2">
    <property type="entry name" value="L-2-HYDROXYGLUTARATE DEHYDROGENASE, MITOCHONDRIAL"/>
    <property type="match status" value="1"/>
</dbReference>
<dbReference type="Pfam" id="PF06039">
    <property type="entry name" value="Mqo"/>
    <property type="match status" value="1"/>
</dbReference>
<dbReference type="SUPFAM" id="SSF51905">
    <property type="entry name" value="FAD/NAD(P)-binding domain"/>
    <property type="match status" value="1"/>
</dbReference>
<feature type="chain" id="PRO_0000128730" description="Probable malate:quinone oxidoreductase 2">
    <location>
        <begin position="1"/>
        <end position="507"/>
    </location>
</feature>
<protein>
    <recommendedName>
        <fullName evidence="1">Probable malate:quinone oxidoreductase 2</fullName>
        <ecNumber evidence="1">1.1.5.4</ecNumber>
    </recommendedName>
    <alternativeName>
        <fullName evidence="1">MQO 2</fullName>
    </alternativeName>
    <alternativeName>
        <fullName evidence="1">Malate dehydrogenase [quinone] 2</fullName>
    </alternativeName>
</protein>
<reference key="1">
    <citation type="submission" date="2002-07" db="EMBL/GenBank/DDBJ databases">
        <authorList>
            <person name="Kretzschmar U."/>
            <person name="Goerisch H."/>
        </authorList>
    </citation>
    <scope>NUCLEOTIDE SEQUENCE [GENOMIC DNA]</scope>
    <source>
        <strain>ATCC 17933</strain>
    </source>
</reference>
<reference key="2">
    <citation type="journal article" date="2000" name="Nature">
        <title>Complete genome sequence of Pseudomonas aeruginosa PAO1, an opportunistic pathogen.</title>
        <authorList>
            <person name="Stover C.K."/>
            <person name="Pham X.-Q.T."/>
            <person name="Erwin A.L."/>
            <person name="Mizoguchi S.D."/>
            <person name="Warrener P."/>
            <person name="Hickey M.J."/>
            <person name="Brinkman F.S.L."/>
            <person name="Hufnagle W.O."/>
            <person name="Kowalik D.J."/>
            <person name="Lagrou M."/>
            <person name="Garber R.L."/>
            <person name="Goltry L."/>
            <person name="Tolentino E."/>
            <person name="Westbrock-Wadman S."/>
            <person name="Yuan Y."/>
            <person name="Brody L.L."/>
            <person name="Coulter S.N."/>
            <person name="Folger K.R."/>
            <person name="Kas A."/>
            <person name="Larbig K."/>
            <person name="Lim R.M."/>
            <person name="Smith K.A."/>
            <person name="Spencer D.H."/>
            <person name="Wong G.K.-S."/>
            <person name="Wu Z."/>
            <person name="Paulsen I.T."/>
            <person name="Reizer J."/>
            <person name="Saier M.H. Jr."/>
            <person name="Hancock R.E.W."/>
            <person name="Lory S."/>
            <person name="Olson M.V."/>
        </authorList>
    </citation>
    <scope>NUCLEOTIDE SEQUENCE [LARGE SCALE GENOMIC DNA]</scope>
    <source>
        <strain>ATCC 15692 / DSM 22644 / CIP 104116 / JCM 14847 / LMG 12228 / 1C / PRS 101 / PAO1</strain>
    </source>
</reference>
<sequence>MAQNDHETVDMLLVGAGIMSATLAVLLKELDPNLKMEVVELQESGAIESSNPWNNAGTGHAGLCELNYTPQSADGSIDIKKAVGINTMFEVSKQFWSHLVAKGTFGSPKTFINPVPHLSFVRGSEGIAYLKKRFESLTKHHAFETMVYSEDKATLAEWMPLMMPGRPADEAIAATRVEGGTDVNFGALTNQLLQHLAQQPGAQIRYNQKVTHLRRADNGWRVTVKDTRNGGDREIQARFVFLGAGGGALPLLQLSGIPEGKGFGGFPVSGQWLRCDNPEIVKQHQAKVYSQAEVGSPPMSVPHLDTRVVDGKKSLLFGPYAGFSTKFLRHGSFLDLPLSVRPGNILPMLSVARDNMDLTRYLIGQVMQSPEQRLEALRKFYPEARAEDWRLEVAGQRVQIIKKDPKKGGILQFGTELVAAHDGSIAALLGASPGASVTVSIMLGLIERCFPEQARSPEWSAKLKEIFPAREKELESDAELYRSVSSRCSEVLELTAKNDVQAPVNAE</sequence>
<comment type="catalytic activity">
    <reaction evidence="1">
        <text>(S)-malate + a quinone = a quinol + oxaloacetate</text>
        <dbReference type="Rhea" id="RHEA:46012"/>
        <dbReference type="ChEBI" id="CHEBI:15589"/>
        <dbReference type="ChEBI" id="CHEBI:16452"/>
        <dbReference type="ChEBI" id="CHEBI:24646"/>
        <dbReference type="ChEBI" id="CHEBI:132124"/>
        <dbReference type="EC" id="1.1.5.4"/>
    </reaction>
</comment>
<comment type="cofactor">
    <cofactor evidence="1">
        <name>FAD</name>
        <dbReference type="ChEBI" id="CHEBI:57692"/>
    </cofactor>
</comment>
<comment type="pathway">
    <text evidence="1">Carbohydrate metabolism; tricarboxylic acid cycle; oxaloacetate from (S)-malate (quinone route): step 1/1.</text>
</comment>
<comment type="similarity">
    <text evidence="1">Belongs to the MQO family.</text>
</comment>
<evidence type="ECO:0000255" key="1">
    <source>
        <dbReference type="HAMAP-Rule" id="MF_00212"/>
    </source>
</evidence>
<proteinExistence type="inferred from homology"/>
<accession>Q9HVF1</accession>
<organism>
    <name type="scientific">Pseudomonas aeruginosa (strain ATCC 15692 / DSM 22644 / CIP 104116 / JCM 14847 / LMG 12228 / 1C / PRS 101 / PAO1)</name>
    <dbReference type="NCBI Taxonomy" id="208964"/>
    <lineage>
        <taxon>Bacteria</taxon>
        <taxon>Pseudomonadati</taxon>
        <taxon>Pseudomonadota</taxon>
        <taxon>Gammaproteobacteria</taxon>
        <taxon>Pseudomonadales</taxon>
        <taxon>Pseudomonadaceae</taxon>
        <taxon>Pseudomonas</taxon>
    </lineage>
</organism>
<keyword id="KW-0274">FAD</keyword>
<keyword id="KW-0285">Flavoprotein</keyword>
<keyword id="KW-0560">Oxidoreductase</keyword>
<keyword id="KW-1185">Reference proteome</keyword>
<keyword id="KW-0816">Tricarboxylic acid cycle</keyword>
<gene>
    <name evidence="1" type="primary">mqo2</name>
    <name type="synonym">mqoB</name>
    <name type="ordered locus">PA4640</name>
</gene>
<name>MQO2_PSEAE</name>